<organism>
    <name type="scientific">Simian virus 12 (strain wt100)</name>
    <name type="common">SV-12</name>
    <name type="synonym">Baboon polyomavirus 1</name>
    <dbReference type="NCBI Taxonomy" id="557605"/>
    <lineage>
        <taxon>Viruses</taxon>
        <taxon>Monodnaviria</taxon>
        <taxon>Shotokuvirae</taxon>
        <taxon>Cossaviricota</taxon>
        <taxon>Papovaviricetes</taxon>
        <taxon>Sepolyvirales</taxon>
        <taxon>Polyomaviridae</taxon>
        <taxon>Simian virus 12</taxon>
    </lineage>
</organism>
<protein>
    <recommendedName>
        <fullName>Agnoprotein</fullName>
    </recommendedName>
    <alternativeName>
        <fullName>Agno</fullName>
    </alternativeName>
</protein>
<evidence type="ECO:0000250" key="1"/>
<evidence type="ECO:0000255" key="2"/>
<evidence type="ECO:0000256" key="3">
    <source>
        <dbReference type="SAM" id="MobiDB-lite"/>
    </source>
</evidence>
<evidence type="ECO:0000305" key="4"/>
<reference key="1">
    <citation type="journal article" date="2005" name="J. Virol.">
        <title>Complete nucleotide sequence of polyomavirus SA12.</title>
        <authorList>
            <person name="Cantalupo P."/>
            <person name="Doering A."/>
            <person name="Sullivan C.S."/>
            <person name="Pal A."/>
            <person name="Peden K.W."/>
            <person name="Lewis A.M."/>
            <person name="Pipas J.M."/>
        </authorList>
    </citation>
    <scope>NUCLEOTIDE SEQUENCE [GENOMIC DNA]</scope>
    <source>
        <strain>SA12</strain>
    </source>
</reference>
<reference key="2">
    <citation type="journal article" date="2006" name="J. Virol.">
        <title>Comparing phylogenetic codivergence between polyomaviruses and their hosts.</title>
        <authorList>
            <person name="Perez-Losada M."/>
            <person name="Christensen R.G."/>
            <person name="McClellan D.A."/>
            <person name="Adams B.J."/>
            <person name="Viscidi R.P."/>
            <person name="Demma J.C."/>
            <person name="Crandall K.A."/>
        </authorList>
    </citation>
    <scope>NUCLEOTIDE SEQUENCE [GENOMIC DNA]</scope>
    <source>
        <strain>SA12</strain>
    </source>
</reference>
<dbReference type="EMBL" id="AY614708">
    <property type="protein sequence ID" value="AAV75981.1"/>
    <property type="molecule type" value="Genomic_DNA"/>
</dbReference>
<dbReference type="EMBL" id="DQ435829">
    <property type="protein sequence ID" value="ABD92873.1"/>
    <property type="molecule type" value="Genomic_DNA"/>
</dbReference>
<dbReference type="RefSeq" id="YP_406551.1">
    <property type="nucleotide sequence ID" value="NC_007611.1"/>
</dbReference>
<dbReference type="SMR" id="Q3L6L9"/>
<dbReference type="GeneID" id="5123720"/>
<dbReference type="KEGG" id="vg:5123720"/>
<dbReference type="Proteomes" id="UP000130309">
    <property type="component" value="Segment"/>
</dbReference>
<dbReference type="Proteomes" id="UP000173202">
    <property type="component" value="Genome"/>
</dbReference>
<dbReference type="GO" id="GO:0044200">
    <property type="term" value="C:host cell nuclear membrane"/>
    <property type="evidence" value="ECO:0007669"/>
    <property type="project" value="UniProtKB-SubCell"/>
</dbReference>
<dbReference type="GO" id="GO:0020002">
    <property type="term" value="C:host cell plasma membrane"/>
    <property type="evidence" value="ECO:0007669"/>
    <property type="project" value="UniProtKB-SubCell"/>
</dbReference>
<dbReference type="GO" id="GO:0044169">
    <property type="term" value="C:host cell rough endoplasmic reticulum membrane"/>
    <property type="evidence" value="ECO:0007669"/>
    <property type="project" value="UniProtKB-SubCell"/>
</dbReference>
<dbReference type="GO" id="GO:0016020">
    <property type="term" value="C:membrane"/>
    <property type="evidence" value="ECO:0007669"/>
    <property type="project" value="UniProtKB-KW"/>
</dbReference>
<dbReference type="GO" id="GO:0015267">
    <property type="term" value="F:channel activity"/>
    <property type="evidence" value="ECO:0007669"/>
    <property type="project" value="UniProtKB-KW"/>
</dbReference>
<dbReference type="GO" id="GO:0003677">
    <property type="term" value="F:DNA binding"/>
    <property type="evidence" value="ECO:0007669"/>
    <property type="project" value="InterPro"/>
</dbReference>
<dbReference type="GO" id="GO:0034220">
    <property type="term" value="P:monoatomic ion transmembrane transport"/>
    <property type="evidence" value="ECO:0007669"/>
    <property type="project" value="UniProtKB-KW"/>
</dbReference>
<dbReference type="InterPro" id="IPR002643">
    <property type="entry name" value="Polyoma_agno"/>
</dbReference>
<dbReference type="Pfam" id="PF01736">
    <property type="entry name" value="Polyoma_agno"/>
    <property type="match status" value="1"/>
</dbReference>
<accession>Q3L6L9</accession>
<accession>Q1W5X4</accession>
<feature type="chain" id="PRO_0000356262" description="Agnoprotein">
    <location>
        <begin position="1"/>
        <end position="68"/>
    </location>
</feature>
<feature type="topological domain" description="Cytoplasmic" evidence="2">
    <location>
        <begin position="1"/>
        <end position="24"/>
    </location>
</feature>
<feature type="transmembrane region" description="Helical; Signal-anchor for type II membrane protein" evidence="2">
    <location>
        <begin position="25"/>
        <end position="41"/>
    </location>
</feature>
<feature type="topological domain" description="Extracellular" evidence="2">
    <location>
        <begin position="42"/>
        <end position="68"/>
    </location>
</feature>
<feature type="region of interest" description="Disordered" evidence="3">
    <location>
        <begin position="44"/>
        <end position="68"/>
    </location>
</feature>
<feature type="modified residue" description="Phosphoserine; by host" evidence="1">
    <location>
        <position position="7"/>
    </location>
</feature>
<feature type="modified residue" description="Phosphoserine; by host" evidence="1">
    <location>
        <position position="11"/>
    </location>
</feature>
<feature type="modified residue" description="Phosphothreonine; by host" evidence="1">
    <location>
        <position position="21"/>
    </location>
</feature>
<comment type="function">
    <text evidence="1">Alters the structure of the nuclear envelope by interacting with host CBX5 and disrupting CBX5 association with LBR. Involved in the perinuclear-nuclear localization of the capsid protein VP1 during virion assembly and maturation. Plays an important role in the release of progeny virions from infected cells and in viral propagation, probably by acting as a viral ionic channel in the host plasma membrane. Allows influx of extracellular calcium ions in the host cell. May contribute to viral genome transcription and translation of viral late proteins (By similarity).</text>
</comment>
<comment type="subunit">
    <text evidence="1">Homooligomer. Interacts with VP1 (By similarity). Interacts with large T antigen; this interaction may impact upon the activity of T-antigen on the control of viral gene transcription and replication. Interacts with small t antigen. Interacts with host CBX5; this interaction induces the dissociation of CBX5 from LBR, resulting in destabilization of the nuclear envelope (By similarity).</text>
</comment>
<comment type="subcellular location">
    <subcellularLocation>
        <location evidence="4">Host cytoplasm</location>
    </subcellularLocation>
    <subcellularLocation>
        <location evidence="4">Host nucleus membrane</location>
        <topology evidence="4">Single-pass type II membrane protein</topology>
    </subcellularLocation>
    <subcellularLocation>
        <location evidence="4">Host rough endoplasmic reticulum membrane</location>
        <topology evidence="4">Single-pass type II membrane protein</topology>
    </subcellularLocation>
    <subcellularLocation>
        <location evidence="4">Host cell membrane</location>
        <topology evidence="4">Single-pass type II membrane protein</topology>
    </subcellularLocation>
    <text evidence="1">Mostly perinuclear.</text>
</comment>
<comment type="alternative products">
    <event type="alternative splicing"/>
    <event type="alternative initiation"/>
    <isoform>
        <id>Q3L6L9-1</id>
        <name>Agno</name>
        <sequence type="displayed"/>
    </isoform>
    <isoform>
        <id>Q1W5X1-1</id>
        <name>VP1</name>
        <name>Major capsid protein VP1</name>
        <sequence type="external"/>
    </isoform>
    <isoform>
        <id>Q3L6L8-1</id>
        <name>VP2</name>
        <name>Minor capsid protein VP2</name>
        <sequence type="external"/>
    </isoform>
    <isoform>
        <id>Q3L6L8-2</id>
        <name>VP3</name>
        <name>Minor capsid protein VP3</name>
        <sequence type="external"/>
    </isoform>
    <isoform>
        <id>Q3L6L8-3</id>
        <name>VP4</name>
        <name>Viroporin VP4</name>
        <sequence type="external"/>
    </isoform>
</comment>
<comment type="PTM">
    <text evidence="1">Phosphorylated by host PKC. Phosphorylation alters the stability and may also have an impact on the subcellular location (By similarity).</text>
</comment>
<comment type="miscellaneous">
    <molecule>Isoform Agno</molecule>
    <text>Produced by alternative initiation of the late mRNA.</text>
</comment>
<comment type="similarity">
    <text evidence="4">Belongs to the polyomavirus agnoprotein family.</text>
</comment>
<keyword id="KW-0024">Alternative initiation</keyword>
<keyword id="KW-0025">Alternative splicing</keyword>
<keyword id="KW-1032">Host cell membrane</keyword>
<keyword id="KW-1035">Host cytoplasm</keyword>
<keyword id="KW-1038">Host endoplasmic reticulum</keyword>
<keyword id="KW-1043">Host membrane</keyword>
<keyword id="KW-1048">Host nucleus</keyword>
<keyword id="KW-0945">Host-virus interaction</keyword>
<keyword id="KW-0407">Ion channel</keyword>
<keyword id="KW-0406">Ion transport</keyword>
<keyword id="KW-0472">Membrane</keyword>
<keyword id="KW-0597">Phosphoprotein</keyword>
<keyword id="KW-0735">Signal-anchor</keyword>
<keyword id="KW-0812">Transmembrane</keyword>
<keyword id="KW-1133">Transmembrane helix</keyword>
<keyword id="KW-0813">Transport</keyword>
<keyword id="KW-1182">Viral ion channel</keyword>
<name>AGNO_POVS1</name>
<sequence>MVLRQLSRQASVKVGKTWTGTKRRAQRIFIFILELLLDFCRGEDSVDGKKKKDSLTDKTETVTEKKES</sequence>
<organismHost>
    <name type="scientific">Papio hamadryas ursinus</name>
    <name type="common">Chacma baboon</name>
    <dbReference type="NCBI Taxonomy" id="36229"/>
</organismHost>
<proteinExistence type="inferred from homology"/>